<sequence length="274" mass="30931">MEIKMAKDYGFCFGVKRAIQIAEKNQNSLIFGSLIHNAKEINRLEKNFNVKIEEDPKKIPKNKSVIIRTHGIPKQDLEYLKNKGVKITDATCPYVIKPQQIVESMSKEGYQIVLFGDINHPEVKGVISYATNQALVINSLEELQEKKLQRKVALVSQTTKQTPQLLQIASYLVERCTEVRIFNTICNATSYNQKAALDLSKEVDIMIVVGGKTSSNTKQLLSIAKQHCEDSYLVEDENELELAWFKNKKLCGITAGASTPDWIIENVKQKISTI</sequence>
<feature type="chain" id="PRO_1000098954" description="4-hydroxy-3-methylbut-2-enyl diphosphate reductase">
    <location>
        <begin position="1"/>
        <end position="274"/>
    </location>
</feature>
<feature type="active site" description="Proton donor" evidence="1">
    <location>
        <position position="122"/>
    </location>
</feature>
<feature type="binding site" evidence="1">
    <location>
        <position position="12"/>
    </location>
    <ligand>
        <name>[4Fe-4S] cluster</name>
        <dbReference type="ChEBI" id="CHEBI:49883"/>
    </ligand>
</feature>
<feature type="binding site" evidence="1">
    <location>
        <position position="36"/>
    </location>
    <ligand>
        <name>(2E)-4-hydroxy-3-methylbut-2-enyl diphosphate</name>
        <dbReference type="ChEBI" id="CHEBI:128753"/>
    </ligand>
</feature>
<feature type="binding site" evidence="1">
    <location>
        <position position="36"/>
    </location>
    <ligand>
        <name>dimethylallyl diphosphate</name>
        <dbReference type="ChEBI" id="CHEBI:57623"/>
    </ligand>
</feature>
<feature type="binding site" evidence="1">
    <location>
        <position position="36"/>
    </location>
    <ligand>
        <name>isopentenyl diphosphate</name>
        <dbReference type="ChEBI" id="CHEBI:128769"/>
    </ligand>
</feature>
<feature type="binding site" evidence="1">
    <location>
        <position position="70"/>
    </location>
    <ligand>
        <name>(2E)-4-hydroxy-3-methylbut-2-enyl diphosphate</name>
        <dbReference type="ChEBI" id="CHEBI:128753"/>
    </ligand>
</feature>
<feature type="binding site" evidence="1">
    <location>
        <position position="70"/>
    </location>
    <ligand>
        <name>dimethylallyl diphosphate</name>
        <dbReference type="ChEBI" id="CHEBI:57623"/>
    </ligand>
</feature>
<feature type="binding site" evidence="1">
    <location>
        <position position="70"/>
    </location>
    <ligand>
        <name>isopentenyl diphosphate</name>
        <dbReference type="ChEBI" id="CHEBI:128769"/>
    </ligand>
</feature>
<feature type="binding site" evidence="1">
    <location>
        <position position="92"/>
    </location>
    <ligand>
        <name>[4Fe-4S] cluster</name>
        <dbReference type="ChEBI" id="CHEBI:49883"/>
    </ligand>
</feature>
<feature type="binding site" evidence="1">
    <location>
        <position position="120"/>
    </location>
    <ligand>
        <name>(2E)-4-hydroxy-3-methylbut-2-enyl diphosphate</name>
        <dbReference type="ChEBI" id="CHEBI:128753"/>
    </ligand>
</feature>
<feature type="binding site" evidence="1">
    <location>
        <position position="120"/>
    </location>
    <ligand>
        <name>dimethylallyl diphosphate</name>
        <dbReference type="ChEBI" id="CHEBI:57623"/>
    </ligand>
</feature>
<feature type="binding site" evidence="1">
    <location>
        <position position="120"/>
    </location>
    <ligand>
        <name>isopentenyl diphosphate</name>
        <dbReference type="ChEBI" id="CHEBI:128769"/>
    </ligand>
</feature>
<feature type="binding site" evidence="1">
    <location>
        <position position="158"/>
    </location>
    <ligand>
        <name>(2E)-4-hydroxy-3-methylbut-2-enyl diphosphate</name>
        <dbReference type="ChEBI" id="CHEBI:128753"/>
    </ligand>
</feature>
<feature type="binding site" evidence="1">
    <location>
        <position position="186"/>
    </location>
    <ligand>
        <name>[4Fe-4S] cluster</name>
        <dbReference type="ChEBI" id="CHEBI:49883"/>
    </ligand>
</feature>
<feature type="binding site" evidence="1">
    <location>
        <position position="214"/>
    </location>
    <ligand>
        <name>(2E)-4-hydroxy-3-methylbut-2-enyl diphosphate</name>
        <dbReference type="ChEBI" id="CHEBI:128753"/>
    </ligand>
</feature>
<feature type="binding site" evidence="1">
    <location>
        <position position="214"/>
    </location>
    <ligand>
        <name>dimethylallyl diphosphate</name>
        <dbReference type="ChEBI" id="CHEBI:57623"/>
    </ligand>
</feature>
<feature type="binding site" evidence="1">
    <location>
        <position position="214"/>
    </location>
    <ligand>
        <name>isopentenyl diphosphate</name>
        <dbReference type="ChEBI" id="CHEBI:128769"/>
    </ligand>
</feature>
<feature type="binding site" evidence="1">
    <location>
        <position position="215"/>
    </location>
    <ligand>
        <name>(2E)-4-hydroxy-3-methylbut-2-enyl diphosphate</name>
        <dbReference type="ChEBI" id="CHEBI:128753"/>
    </ligand>
</feature>
<feature type="binding site" evidence="1">
    <location>
        <position position="215"/>
    </location>
    <ligand>
        <name>dimethylallyl diphosphate</name>
        <dbReference type="ChEBI" id="CHEBI:57623"/>
    </ligand>
</feature>
<feature type="binding site" evidence="1">
    <location>
        <position position="215"/>
    </location>
    <ligand>
        <name>isopentenyl diphosphate</name>
        <dbReference type="ChEBI" id="CHEBI:128769"/>
    </ligand>
</feature>
<feature type="binding site" evidence="1">
    <location>
        <position position="216"/>
    </location>
    <ligand>
        <name>(2E)-4-hydroxy-3-methylbut-2-enyl diphosphate</name>
        <dbReference type="ChEBI" id="CHEBI:128753"/>
    </ligand>
</feature>
<feature type="binding site" evidence="1">
    <location>
        <position position="216"/>
    </location>
    <ligand>
        <name>dimethylallyl diphosphate</name>
        <dbReference type="ChEBI" id="CHEBI:57623"/>
    </ligand>
</feature>
<feature type="binding site" evidence="1">
    <location>
        <position position="216"/>
    </location>
    <ligand>
        <name>isopentenyl diphosphate</name>
        <dbReference type="ChEBI" id="CHEBI:128769"/>
    </ligand>
</feature>
<feature type="binding site" evidence="1">
    <location>
        <position position="258"/>
    </location>
    <ligand>
        <name>(2E)-4-hydroxy-3-methylbut-2-enyl diphosphate</name>
        <dbReference type="ChEBI" id="CHEBI:128753"/>
    </ligand>
</feature>
<feature type="binding site" evidence="1">
    <location>
        <position position="258"/>
    </location>
    <ligand>
        <name>dimethylallyl diphosphate</name>
        <dbReference type="ChEBI" id="CHEBI:57623"/>
    </ligand>
</feature>
<feature type="binding site" evidence="1">
    <location>
        <position position="258"/>
    </location>
    <ligand>
        <name>isopentenyl diphosphate</name>
        <dbReference type="ChEBI" id="CHEBI:128769"/>
    </ligand>
</feature>
<organism>
    <name type="scientific">Helicobacter pylori (strain Shi470)</name>
    <dbReference type="NCBI Taxonomy" id="512562"/>
    <lineage>
        <taxon>Bacteria</taxon>
        <taxon>Pseudomonadati</taxon>
        <taxon>Campylobacterota</taxon>
        <taxon>Epsilonproteobacteria</taxon>
        <taxon>Campylobacterales</taxon>
        <taxon>Helicobacteraceae</taxon>
        <taxon>Helicobacter</taxon>
    </lineage>
</organism>
<accession>B2UUG0</accession>
<reference key="1">
    <citation type="submission" date="2008-05" db="EMBL/GenBank/DDBJ databases">
        <title>Genome sequence of Helicobacter pylori from the remote Amazon: traces of Asian ancestry of the first Americans.</title>
        <authorList>
            <person name="Kersulyte D."/>
            <person name="Kalia A."/>
            <person name="Gilman R.H."/>
            <person name="Berg D.E."/>
        </authorList>
    </citation>
    <scope>NUCLEOTIDE SEQUENCE [LARGE SCALE GENOMIC DNA]</scope>
    <source>
        <strain>Shi470</strain>
    </source>
</reference>
<keyword id="KW-0004">4Fe-4S</keyword>
<keyword id="KW-0408">Iron</keyword>
<keyword id="KW-0411">Iron-sulfur</keyword>
<keyword id="KW-0414">Isoprene biosynthesis</keyword>
<keyword id="KW-0479">Metal-binding</keyword>
<keyword id="KW-0560">Oxidoreductase</keyword>
<evidence type="ECO:0000255" key="1">
    <source>
        <dbReference type="HAMAP-Rule" id="MF_00191"/>
    </source>
</evidence>
<proteinExistence type="inferred from homology"/>
<gene>
    <name evidence="1" type="primary">ispH</name>
    <name type="ordered locus">HPSH_05405</name>
</gene>
<name>ISPH_HELPS</name>
<protein>
    <recommendedName>
        <fullName evidence="1">4-hydroxy-3-methylbut-2-enyl diphosphate reductase</fullName>
        <shortName evidence="1">HMBPP reductase</shortName>
        <ecNumber evidence="1">1.17.7.4</ecNumber>
    </recommendedName>
</protein>
<comment type="function">
    <text evidence="1">Catalyzes the conversion of 1-hydroxy-2-methyl-2-(E)-butenyl 4-diphosphate (HMBPP) into a mixture of isopentenyl diphosphate (IPP) and dimethylallyl diphosphate (DMAPP). Acts in the terminal step of the DOXP/MEP pathway for isoprenoid precursor biosynthesis.</text>
</comment>
<comment type="catalytic activity">
    <reaction evidence="1">
        <text>isopentenyl diphosphate + 2 oxidized [2Fe-2S]-[ferredoxin] + H2O = (2E)-4-hydroxy-3-methylbut-2-enyl diphosphate + 2 reduced [2Fe-2S]-[ferredoxin] + 2 H(+)</text>
        <dbReference type="Rhea" id="RHEA:24488"/>
        <dbReference type="Rhea" id="RHEA-COMP:10000"/>
        <dbReference type="Rhea" id="RHEA-COMP:10001"/>
        <dbReference type="ChEBI" id="CHEBI:15377"/>
        <dbReference type="ChEBI" id="CHEBI:15378"/>
        <dbReference type="ChEBI" id="CHEBI:33737"/>
        <dbReference type="ChEBI" id="CHEBI:33738"/>
        <dbReference type="ChEBI" id="CHEBI:128753"/>
        <dbReference type="ChEBI" id="CHEBI:128769"/>
        <dbReference type="EC" id="1.17.7.4"/>
    </reaction>
</comment>
<comment type="catalytic activity">
    <reaction evidence="1">
        <text>dimethylallyl diphosphate + 2 oxidized [2Fe-2S]-[ferredoxin] + H2O = (2E)-4-hydroxy-3-methylbut-2-enyl diphosphate + 2 reduced [2Fe-2S]-[ferredoxin] + 2 H(+)</text>
        <dbReference type="Rhea" id="RHEA:24825"/>
        <dbReference type="Rhea" id="RHEA-COMP:10000"/>
        <dbReference type="Rhea" id="RHEA-COMP:10001"/>
        <dbReference type="ChEBI" id="CHEBI:15377"/>
        <dbReference type="ChEBI" id="CHEBI:15378"/>
        <dbReference type="ChEBI" id="CHEBI:33737"/>
        <dbReference type="ChEBI" id="CHEBI:33738"/>
        <dbReference type="ChEBI" id="CHEBI:57623"/>
        <dbReference type="ChEBI" id="CHEBI:128753"/>
        <dbReference type="EC" id="1.17.7.4"/>
    </reaction>
</comment>
<comment type="cofactor">
    <cofactor evidence="1">
        <name>[4Fe-4S] cluster</name>
        <dbReference type="ChEBI" id="CHEBI:49883"/>
    </cofactor>
    <text evidence="1">Binds 1 [4Fe-4S] cluster per subunit.</text>
</comment>
<comment type="pathway">
    <text evidence="1">Isoprenoid biosynthesis; dimethylallyl diphosphate biosynthesis; dimethylallyl diphosphate from (2E)-4-hydroxy-3-methylbutenyl diphosphate: step 1/1.</text>
</comment>
<comment type="pathway">
    <text evidence="1">Isoprenoid biosynthesis; isopentenyl diphosphate biosynthesis via DXP pathway; isopentenyl diphosphate from 1-deoxy-D-xylulose 5-phosphate: step 6/6.</text>
</comment>
<comment type="similarity">
    <text evidence="1">Belongs to the IspH family.</text>
</comment>
<dbReference type="EC" id="1.17.7.4" evidence="1"/>
<dbReference type="EMBL" id="CP001072">
    <property type="protein sequence ID" value="ACD48492.1"/>
    <property type="molecule type" value="Genomic_DNA"/>
</dbReference>
<dbReference type="RefSeq" id="WP_000403567.1">
    <property type="nucleotide sequence ID" value="NC_010698.2"/>
</dbReference>
<dbReference type="SMR" id="B2UUG0"/>
<dbReference type="KEGG" id="hps:HPSH_05405"/>
<dbReference type="HOGENOM" id="CLU_027486_0_1_7"/>
<dbReference type="UniPathway" id="UPA00056">
    <property type="reaction ID" value="UER00097"/>
</dbReference>
<dbReference type="UniPathway" id="UPA00059">
    <property type="reaction ID" value="UER00105"/>
</dbReference>
<dbReference type="GO" id="GO:0051539">
    <property type="term" value="F:4 iron, 4 sulfur cluster binding"/>
    <property type="evidence" value="ECO:0007669"/>
    <property type="project" value="UniProtKB-UniRule"/>
</dbReference>
<dbReference type="GO" id="GO:0051745">
    <property type="term" value="F:4-hydroxy-3-methylbut-2-enyl diphosphate reductase activity"/>
    <property type="evidence" value="ECO:0007669"/>
    <property type="project" value="UniProtKB-UniRule"/>
</dbReference>
<dbReference type="GO" id="GO:0046872">
    <property type="term" value="F:metal ion binding"/>
    <property type="evidence" value="ECO:0007669"/>
    <property type="project" value="UniProtKB-KW"/>
</dbReference>
<dbReference type="GO" id="GO:0050992">
    <property type="term" value="P:dimethylallyl diphosphate biosynthetic process"/>
    <property type="evidence" value="ECO:0007669"/>
    <property type="project" value="UniProtKB-UniRule"/>
</dbReference>
<dbReference type="GO" id="GO:0019288">
    <property type="term" value="P:isopentenyl diphosphate biosynthetic process, methylerythritol 4-phosphate pathway"/>
    <property type="evidence" value="ECO:0007669"/>
    <property type="project" value="UniProtKB-UniRule"/>
</dbReference>
<dbReference type="GO" id="GO:0016114">
    <property type="term" value="P:terpenoid biosynthetic process"/>
    <property type="evidence" value="ECO:0007669"/>
    <property type="project" value="UniProtKB-UniRule"/>
</dbReference>
<dbReference type="CDD" id="cd13944">
    <property type="entry name" value="lytB_ispH"/>
    <property type="match status" value="1"/>
</dbReference>
<dbReference type="Gene3D" id="3.40.50.11270">
    <property type="match status" value="1"/>
</dbReference>
<dbReference type="Gene3D" id="3.40.1010.20">
    <property type="entry name" value="4-hydroxy-3-methylbut-2-enyl diphosphate reductase, catalytic domain"/>
    <property type="match status" value="2"/>
</dbReference>
<dbReference type="HAMAP" id="MF_00191">
    <property type="entry name" value="IspH"/>
    <property type="match status" value="1"/>
</dbReference>
<dbReference type="InterPro" id="IPR003451">
    <property type="entry name" value="LytB/IspH"/>
</dbReference>
<dbReference type="NCBIfam" id="TIGR00216">
    <property type="entry name" value="ispH_lytB"/>
    <property type="match status" value="1"/>
</dbReference>
<dbReference type="NCBIfam" id="NF002187">
    <property type="entry name" value="PRK01045.1-1"/>
    <property type="match status" value="1"/>
</dbReference>
<dbReference type="PANTHER" id="PTHR30426">
    <property type="entry name" value="4-HYDROXY-3-METHYLBUT-2-ENYL DIPHOSPHATE REDUCTASE"/>
    <property type="match status" value="1"/>
</dbReference>
<dbReference type="PANTHER" id="PTHR30426:SF0">
    <property type="entry name" value="4-HYDROXY-3-METHYLBUT-2-ENYL DIPHOSPHATE REDUCTASE"/>
    <property type="match status" value="1"/>
</dbReference>
<dbReference type="Pfam" id="PF02401">
    <property type="entry name" value="LYTB"/>
    <property type="match status" value="1"/>
</dbReference>